<name>KCY_MYCBP</name>
<organism>
    <name type="scientific">Mycobacterium bovis (strain BCG / Pasteur 1173P2)</name>
    <dbReference type="NCBI Taxonomy" id="410289"/>
    <lineage>
        <taxon>Bacteria</taxon>
        <taxon>Bacillati</taxon>
        <taxon>Actinomycetota</taxon>
        <taxon>Actinomycetes</taxon>
        <taxon>Mycobacteriales</taxon>
        <taxon>Mycobacteriaceae</taxon>
        <taxon>Mycobacterium</taxon>
        <taxon>Mycobacterium tuberculosis complex</taxon>
    </lineage>
</organism>
<gene>
    <name evidence="1" type="primary">cmk</name>
    <name type="ordered locus">BCG_1751</name>
</gene>
<sequence>MSRLSAAVVAIDGPAGTGKSSVSRRLARELGARFLDTGAMYRIVTLAVLRAGADPSDIAAVETIASTVQMSLGYDPDGDSCYLAGEDVSVEIRGDAVTRAVSAVSSVPAVRTRLVELQRTMAEGPGSIVVEGRDIGTVVFPDAPVKIFLTASAETRARRRNAQNVAAGLADDYDGVLADVRRRDHLDSTRAVSPLQAAGDAVIVDTSDMTEAEVVAHLLELVTRRSEAVR</sequence>
<dbReference type="EC" id="2.7.4.25" evidence="1"/>
<dbReference type="EMBL" id="AM408590">
    <property type="protein sequence ID" value="CAL71738.1"/>
    <property type="molecule type" value="Genomic_DNA"/>
</dbReference>
<dbReference type="RefSeq" id="WP_003408441.1">
    <property type="nucleotide sequence ID" value="NC_008769.1"/>
</dbReference>
<dbReference type="SMR" id="A1KJC9"/>
<dbReference type="GeneID" id="45425683"/>
<dbReference type="KEGG" id="mbb:BCG_1751"/>
<dbReference type="HOGENOM" id="CLU_079959_0_0_11"/>
<dbReference type="Proteomes" id="UP000001472">
    <property type="component" value="Chromosome"/>
</dbReference>
<dbReference type="GO" id="GO:0005829">
    <property type="term" value="C:cytosol"/>
    <property type="evidence" value="ECO:0007669"/>
    <property type="project" value="TreeGrafter"/>
</dbReference>
<dbReference type="GO" id="GO:0005524">
    <property type="term" value="F:ATP binding"/>
    <property type="evidence" value="ECO:0007669"/>
    <property type="project" value="UniProtKB-UniRule"/>
</dbReference>
<dbReference type="GO" id="GO:0036430">
    <property type="term" value="F:CMP kinase activity"/>
    <property type="evidence" value="ECO:0007669"/>
    <property type="project" value="RHEA"/>
</dbReference>
<dbReference type="GO" id="GO:0036431">
    <property type="term" value="F:dCMP kinase activity"/>
    <property type="evidence" value="ECO:0007669"/>
    <property type="project" value="RHEA"/>
</dbReference>
<dbReference type="GO" id="GO:0015949">
    <property type="term" value="P:nucleobase-containing small molecule interconversion"/>
    <property type="evidence" value="ECO:0007669"/>
    <property type="project" value="TreeGrafter"/>
</dbReference>
<dbReference type="GO" id="GO:0006220">
    <property type="term" value="P:pyrimidine nucleotide metabolic process"/>
    <property type="evidence" value="ECO:0007669"/>
    <property type="project" value="UniProtKB-UniRule"/>
</dbReference>
<dbReference type="CDD" id="cd02020">
    <property type="entry name" value="CMPK"/>
    <property type="match status" value="1"/>
</dbReference>
<dbReference type="Gene3D" id="3.40.50.300">
    <property type="entry name" value="P-loop containing nucleotide triphosphate hydrolases"/>
    <property type="match status" value="1"/>
</dbReference>
<dbReference type="HAMAP" id="MF_00238">
    <property type="entry name" value="Cytidyl_kinase_type1"/>
    <property type="match status" value="1"/>
</dbReference>
<dbReference type="InterPro" id="IPR003136">
    <property type="entry name" value="Cytidylate_kin"/>
</dbReference>
<dbReference type="InterPro" id="IPR011994">
    <property type="entry name" value="Cytidylate_kinase_dom"/>
</dbReference>
<dbReference type="InterPro" id="IPR027417">
    <property type="entry name" value="P-loop_NTPase"/>
</dbReference>
<dbReference type="NCBIfam" id="TIGR00017">
    <property type="entry name" value="cmk"/>
    <property type="match status" value="1"/>
</dbReference>
<dbReference type="PANTHER" id="PTHR21299:SF2">
    <property type="entry name" value="CYTIDYLATE KINASE"/>
    <property type="match status" value="1"/>
</dbReference>
<dbReference type="PANTHER" id="PTHR21299">
    <property type="entry name" value="CYTIDYLATE KINASE/PANTOATE-BETA-ALANINE LIGASE"/>
    <property type="match status" value="1"/>
</dbReference>
<dbReference type="Pfam" id="PF02224">
    <property type="entry name" value="Cytidylate_kin"/>
    <property type="match status" value="1"/>
</dbReference>
<dbReference type="SUPFAM" id="SSF52540">
    <property type="entry name" value="P-loop containing nucleoside triphosphate hydrolases"/>
    <property type="match status" value="1"/>
</dbReference>
<proteinExistence type="inferred from homology"/>
<reference key="1">
    <citation type="journal article" date="2007" name="Proc. Natl. Acad. Sci. U.S.A.">
        <title>Genome plasticity of BCG and impact on vaccine efficacy.</title>
        <authorList>
            <person name="Brosch R."/>
            <person name="Gordon S.V."/>
            <person name="Garnier T."/>
            <person name="Eiglmeier K."/>
            <person name="Frigui W."/>
            <person name="Valenti P."/>
            <person name="Dos Santos S."/>
            <person name="Duthoy S."/>
            <person name="Lacroix C."/>
            <person name="Garcia-Pelayo C."/>
            <person name="Inwald J.K."/>
            <person name="Golby P."/>
            <person name="Garcia J.N."/>
            <person name="Hewinson R.G."/>
            <person name="Behr M.A."/>
            <person name="Quail M.A."/>
            <person name="Churcher C."/>
            <person name="Barrell B.G."/>
            <person name="Parkhill J."/>
            <person name="Cole S.T."/>
        </authorList>
    </citation>
    <scope>NUCLEOTIDE SEQUENCE [LARGE SCALE GENOMIC DNA]</scope>
    <source>
        <strain>BCG / Pasteur 1173P2</strain>
    </source>
</reference>
<feature type="chain" id="PRO_1000048234" description="Cytidylate kinase">
    <location>
        <begin position="1"/>
        <end position="230"/>
    </location>
</feature>
<feature type="binding site" evidence="1">
    <location>
        <begin position="13"/>
        <end position="21"/>
    </location>
    <ligand>
        <name>ATP</name>
        <dbReference type="ChEBI" id="CHEBI:30616"/>
    </ligand>
</feature>
<keyword id="KW-0067">ATP-binding</keyword>
<keyword id="KW-0963">Cytoplasm</keyword>
<keyword id="KW-0418">Kinase</keyword>
<keyword id="KW-0547">Nucleotide-binding</keyword>
<keyword id="KW-0808">Transferase</keyword>
<evidence type="ECO:0000255" key="1">
    <source>
        <dbReference type="HAMAP-Rule" id="MF_00238"/>
    </source>
</evidence>
<protein>
    <recommendedName>
        <fullName evidence="1">Cytidylate kinase</fullName>
        <shortName evidence="1">CK</shortName>
        <ecNumber evidence="1">2.7.4.25</ecNumber>
    </recommendedName>
    <alternativeName>
        <fullName evidence="1">Cytidine monophosphate kinase</fullName>
        <shortName evidence="1">CMP kinase</shortName>
    </alternativeName>
</protein>
<accession>A1KJC9</accession>
<comment type="catalytic activity">
    <reaction evidence="1">
        <text>CMP + ATP = CDP + ADP</text>
        <dbReference type="Rhea" id="RHEA:11600"/>
        <dbReference type="ChEBI" id="CHEBI:30616"/>
        <dbReference type="ChEBI" id="CHEBI:58069"/>
        <dbReference type="ChEBI" id="CHEBI:60377"/>
        <dbReference type="ChEBI" id="CHEBI:456216"/>
        <dbReference type="EC" id="2.7.4.25"/>
    </reaction>
</comment>
<comment type="catalytic activity">
    <reaction evidence="1">
        <text>dCMP + ATP = dCDP + ADP</text>
        <dbReference type="Rhea" id="RHEA:25094"/>
        <dbReference type="ChEBI" id="CHEBI:30616"/>
        <dbReference type="ChEBI" id="CHEBI:57566"/>
        <dbReference type="ChEBI" id="CHEBI:58593"/>
        <dbReference type="ChEBI" id="CHEBI:456216"/>
        <dbReference type="EC" id="2.7.4.25"/>
    </reaction>
</comment>
<comment type="subcellular location">
    <subcellularLocation>
        <location evidence="1">Cytoplasm</location>
    </subcellularLocation>
</comment>
<comment type="similarity">
    <text evidence="1">Belongs to the cytidylate kinase family. Type 1 subfamily.</text>
</comment>